<proteinExistence type="inferred from homology"/>
<gene>
    <name evidence="1" type="primary">glmM</name>
    <name type="ordered locus">Msil_0777</name>
</gene>
<keyword id="KW-0413">Isomerase</keyword>
<keyword id="KW-0460">Magnesium</keyword>
<keyword id="KW-0479">Metal-binding</keyword>
<keyword id="KW-0597">Phosphoprotein</keyword>
<keyword id="KW-1185">Reference proteome</keyword>
<evidence type="ECO:0000255" key="1">
    <source>
        <dbReference type="HAMAP-Rule" id="MF_01554"/>
    </source>
</evidence>
<protein>
    <recommendedName>
        <fullName evidence="1">Phosphoglucosamine mutase</fullName>
        <ecNumber evidence="1">5.4.2.10</ecNumber>
    </recommendedName>
</protein>
<sequence>MPRKHFGTDGIRGQANSVITPELAMKVAQATGVLFQRGEHRHRAVIGKDTRLSSYMIEYAMVAGFASVGVDALLLGPMPTPAVAMLTHSMRADVGVMISASHNSYEDNGIKLFGPDGFKLSDEVETKIETMLDAGFALKLSKPADLGRAMRVEGDRARYIEFAKRTLTRSLSLEGLRIVVDCANGAAYKVAPEALWELGAEVISIGVEPDGFNINRGVGSTSPQALVKKVREMRADIGIALDGDADRVLIVDETGKIVDGDQLMAVIAASWKEDGRLSRPGIVATVMSNLGLERYLESIGLTLARTAVGDRYVLEHMRSEGYNLGGEQSGHIILSDFCTTGDGLVAALQLLAVVKRLEKPVSQVCRRFEPSPQVLRSVRVAAGKPLEDASVARAIDLARKRLAASGRLVIRASGTEPVIRVMGEGDDLDLVESIVNELCDIVASSARAA</sequence>
<accession>B8ER03</accession>
<name>GLMM_METSB</name>
<reference key="1">
    <citation type="journal article" date="2010" name="J. Bacteriol.">
        <title>Complete genome sequence of the aerobic facultative methanotroph Methylocella silvestris BL2.</title>
        <authorList>
            <person name="Chen Y."/>
            <person name="Crombie A."/>
            <person name="Rahman M.T."/>
            <person name="Dedysh S.N."/>
            <person name="Liesack W."/>
            <person name="Stott M.B."/>
            <person name="Alam M."/>
            <person name="Theisen A.R."/>
            <person name="Murrell J.C."/>
            <person name="Dunfield P.F."/>
        </authorList>
    </citation>
    <scope>NUCLEOTIDE SEQUENCE [LARGE SCALE GENOMIC DNA]</scope>
    <source>
        <strain>DSM 15510 / CIP 108128 / LMG 27833 / NCIMB 13906 / BL2</strain>
    </source>
</reference>
<comment type="function">
    <text evidence="1">Catalyzes the conversion of glucosamine-6-phosphate to glucosamine-1-phosphate.</text>
</comment>
<comment type="catalytic activity">
    <reaction evidence="1">
        <text>alpha-D-glucosamine 1-phosphate = D-glucosamine 6-phosphate</text>
        <dbReference type="Rhea" id="RHEA:23424"/>
        <dbReference type="ChEBI" id="CHEBI:58516"/>
        <dbReference type="ChEBI" id="CHEBI:58725"/>
        <dbReference type="EC" id="5.4.2.10"/>
    </reaction>
</comment>
<comment type="cofactor">
    <cofactor evidence="1">
        <name>Mg(2+)</name>
        <dbReference type="ChEBI" id="CHEBI:18420"/>
    </cofactor>
    <text evidence="1">Binds 1 Mg(2+) ion per subunit.</text>
</comment>
<comment type="PTM">
    <text evidence="1">Activated by phosphorylation.</text>
</comment>
<comment type="similarity">
    <text evidence="1">Belongs to the phosphohexose mutase family.</text>
</comment>
<dbReference type="EC" id="5.4.2.10" evidence="1"/>
<dbReference type="EMBL" id="CP001280">
    <property type="protein sequence ID" value="ACK49748.1"/>
    <property type="molecule type" value="Genomic_DNA"/>
</dbReference>
<dbReference type="RefSeq" id="WP_012589818.1">
    <property type="nucleotide sequence ID" value="NC_011666.1"/>
</dbReference>
<dbReference type="SMR" id="B8ER03"/>
<dbReference type="STRING" id="395965.Msil_0777"/>
<dbReference type="KEGG" id="msl:Msil_0777"/>
<dbReference type="eggNOG" id="COG1109">
    <property type="taxonomic scope" value="Bacteria"/>
</dbReference>
<dbReference type="HOGENOM" id="CLU_016950_7_0_5"/>
<dbReference type="OrthoDB" id="9803322at2"/>
<dbReference type="Proteomes" id="UP000002257">
    <property type="component" value="Chromosome"/>
</dbReference>
<dbReference type="GO" id="GO:0005829">
    <property type="term" value="C:cytosol"/>
    <property type="evidence" value="ECO:0007669"/>
    <property type="project" value="TreeGrafter"/>
</dbReference>
<dbReference type="GO" id="GO:0000287">
    <property type="term" value="F:magnesium ion binding"/>
    <property type="evidence" value="ECO:0007669"/>
    <property type="project" value="UniProtKB-UniRule"/>
</dbReference>
<dbReference type="GO" id="GO:0008966">
    <property type="term" value="F:phosphoglucosamine mutase activity"/>
    <property type="evidence" value="ECO:0007669"/>
    <property type="project" value="UniProtKB-UniRule"/>
</dbReference>
<dbReference type="GO" id="GO:0004615">
    <property type="term" value="F:phosphomannomutase activity"/>
    <property type="evidence" value="ECO:0007669"/>
    <property type="project" value="TreeGrafter"/>
</dbReference>
<dbReference type="GO" id="GO:0005975">
    <property type="term" value="P:carbohydrate metabolic process"/>
    <property type="evidence" value="ECO:0007669"/>
    <property type="project" value="InterPro"/>
</dbReference>
<dbReference type="GO" id="GO:0009252">
    <property type="term" value="P:peptidoglycan biosynthetic process"/>
    <property type="evidence" value="ECO:0007669"/>
    <property type="project" value="TreeGrafter"/>
</dbReference>
<dbReference type="GO" id="GO:0006048">
    <property type="term" value="P:UDP-N-acetylglucosamine biosynthetic process"/>
    <property type="evidence" value="ECO:0007669"/>
    <property type="project" value="TreeGrafter"/>
</dbReference>
<dbReference type="CDD" id="cd05802">
    <property type="entry name" value="GlmM"/>
    <property type="match status" value="1"/>
</dbReference>
<dbReference type="FunFam" id="3.40.120.10:FF:000001">
    <property type="entry name" value="Phosphoglucosamine mutase"/>
    <property type="match status" value="1"/>
</dbReference>
<dbReference type="FunFam" id="3.40.120.10:FF:000002">
    <property type="entry name" value="Phosphoglucosamine mutase"/>
    <property type="match status" value="1"/>
</dbReference>
<dbReference type="Gene3D" id="3.40.120.10">
    <property type="entry name" value="Alpha-D-Glucose-1,6-Bisphosphate, subunit A, domain 3"/>
    <property type="match status" value="3"/>
</dbReference>
<dbReference type="Gene3D" id="3.30.310.50">
    <property type="entry name" value="Alpha-D-phosphohexomutase, C-terminal domain"/>
    <property type="match status" value="1"/>
</dbReference>
<dbReference type="HAMAP" id="MF_01554_B">
    <property type="entry name" value="GlmM_B"/>
    <property type="match status" value="1"/>
</dbReference>
<dbReference type="InterPro" id="IPR005844">
    <property type="entry name" value="A-D-PHexomutase_a/b/a-I"/>
</dbReference>
<dbReference type="InterPro" id="IPR016055">
    <property type="entry name" value="A-D-PHexomutase_a/b/a-I/II/III"/>
</dbReference>
<dbReference type="InterPro" id="IPR005845">
    <property type="entry name" value="A-D-PHexomutase_a/b/a-II"/>
</dbReference>
<dbReference type="InterPro" id="IPR005846">
    <property type="entry name" value="A-D-PHexomutase_a/b/a-III"/>
</dbReference>
<dbReference type="InterPro" id="IPR005843">
    <property type="entry name" value="A-D-PHexomutase_C"/>
</dbReference>
<dbReference type="InterPro" id="IPR036900">
    <property type="entry name" value="A-D-PHexomutase_C_sf"/>
</dbReference>
<dbReference type="InterPro" id="IPR005841">
    <property type="entry name" value="Alpha-D-phosphohexomutase_SF"/>
</dbReference>
<dbReference type="InterPro" id="IPR006352">
    <property type="entry name" value="GlmM_bact"/>
</dbReference>
<dbReference type="InterPro" id="IPR050060">
    <property type="entry name" value="Phosphoglucosamine_mutase"/>
</dbReference>
<dbReference type="NCBIfam" id="TIGR01455">
    <property type="entry name" value="glmM"/>
    <property type="match status" value="1"/>
</dbReference>
<dbReference type="NCBIfam" id="NF008139">
    <property type="entry name" value="PRK10887.1"/>
    <property type="match status" value="1"/>
</dbReference>
<dbReference type="PANTHER" id="PTHR42946:SF1">
    <property type="entry name" value="PHOSPHOGLUCOMUTASE (ALPHA-D-GLUCOSE-1,6-BISPHOSPHATE-DEPENDENT)"/>
    <property type="match status" value="1"/>
</dbReference>
<dbReference type="PANTHER" id="PTHR42946">
    <property type="entry name" value="PHOSPHOHEXOSE MUTASE"/>
    <property type="match status" value="1"/>
</dbReference>
<dbReference type="Pfam" id="PF02878">
    <property type="entry name" value="PGM_PMM_I"/>
    <property type="match status" value="1"/>
</dbReference>
<dbReference type="Pfam" id="PF02879">
    <property type="entry name" value="PGM_PMM_II"/>
    <property type="match status" value="1"/>
</dbReference>
<dbReference type="Pfam" id="PF02880">
    <property type="entry name" value="PGM_PMM_III"/>
    <property type="match status" value="1"/>
</dbReference>
<dbReference type="Pfam" id="PF00408">
    <property type="entry name" value="PGM_PMM_IV"/>
    <property type="match status" value="1"/>
</dbReference>
<dbReference type="PRINTS" id="PR00509">
    <property type="entry name" value="PGMPMM"/>
</dbReference>
<dbReference type="SUPFAM" id="SSF55957">
    <property type="entry name" value="Phosphoglucomutase, C-terminal domain"/>
    <property type="match status" value="1"/>
</dbReference>
<dbReference type="SUPFAM" id="SSF53738">
    <property type="entry name" value="Phosphoglucomutase, first 3 domains"/>
    <property type="match status" value="3"/>
</dbReference>
<feature type="chain" id="PRO_1000185375" description="Phosphoglucosamine mutase">
    <location>
        <begin position="1"/>
        <end position="449"/>
    </location>
</feature>
<feature type="active site" description="Phosphoserine intermediate" evidence="1">
    <location>
        <position position="101"/>
    </location>
</feature>
<feature type="binding site" description="via phosphate group" evidence="1">
    <location>
        <position position="101"/>
    </location>
    <ligand>
        <name>Mg(2+)</name>
        <dbReference type="ChEBI" id="CHEBI:18420"/>
    </ligand>
</feature>
<feature type="binding site" evidence="1">
    <location>
        <position position="242"/>
    </location>
    <ligand>
        <name>Mg(2+)</name>
        <dbReference type="ChEBI" id="CHEBI:18420"/>
    </ligand>
</feature>
<feature type="binding site" evidence="1">
    <location>
        <position position="244"/>
    </location>
    <ligand>
        <name>Mg(2+)</name>
        <dbReference type="ChEBI" id="CHEBI:18420"/>
    </ligand>
</feature>
<feature type="binding site" evidence="1">
    <location>
        <position position="246"/>
    </location>
    <ligand>
        <name>Mg(2+)</name>
        <dbReference type="ChEBI" id="CHEBI:18420"/>
    </ligand>
</feature>
<feature type="modified residue" description="Phosphoserine" evidence="1">
    <location>
        <position position="101"/>
    </location>
</feature>
<organism>
    <name type="scientific">Methylocella silvestris (strain DSM 15510 / CIP 108128 / LMG 27833 / NCIMB 13906 / BL2)</name>
    <dbReference type="NCBI Taxonomy" id="395965"/>
    <lineage>
        <taxon>Bacteria</taxon>
        <taxon>Pseudomonadati</taxon>
        <taxon>Pseudomonadota</taxon>
        <taxon>Alphaproteobacteria</taxon>
        <taxon>Hyphomicrobiales</taxon>
        <taxon>Beijerinckiaceae</taxon>
        <taxon>Methylocella</taxon>
    </lineage>
</organism>